<organism>
    <name type="scientific">Helicobacter pylori (strain Shi470)</name>
    <dbReference type="NCBI Taxonomy" id="512562"/>
    <lineage>
        <taxon>Bacteria</taxon>
        <taxon>Pseudomonadati</taxon>
        <taxon>Campylobacterota</taxon>
        <taxon>Epsilonproteobacteria</taxon>
        <taxon>Campylobacterales</taxon>
        <taxon>Helicobacteraceae</taxon>
        <taxon>Helicobacter</taxon>
    </lineage>
</organism>
<sequence>MAKRNVTAKKKVVKKNIARGVVYISATFNNTNITITDEMGNVICWSTAGGLGFKGSKKSTPYAAQQAVESALSKAKEHGVKEVGIKVQGPGSGRETAIKSVGTTEGVKVLWIKDITPLPHNGCRPPKRRRV</sequence>
<accession>B2UV58</accession>
<proteinExistence type="inferred from homology"/>
<evidence type="ECO:0000255" key="1">
    <source>
        <dbReference type="HAMAP-Rule" id="MF_01310"/>
    </source>
</evidence>
<evidence type="ECO:0000305" key="2"/>
<gene>
    <name evidence="1" type="primary">rpsK</name>
    <name type="ordered locus">HPSH_06700</name>
</gene>
<feature type="chain" id="PRO_1000141101" description="Small ribosomal subunit protein uS11">
    <location>
        <begin position="1"/>
        <end position="131"/>
    </location>
</feature>
<name>RS11_HELPS</name>
<comment type="function">
    <text evidence="1">Located on the platform of the 30S subunit, it bridges several disparate RNA helices of the 16S rRNA. Forms part of the Shine-Dalgarno cleft in the 70S ribosome.</text>
</comment>
<comment type="subunit">
    <text evidence="1">Part of the 30S ribosomal subunit. Interacts with proteins S7 and S18. Binds to IF-3.</text>
</comment>
<comment type="similarity">
    <text evidence="1">Belongs to the universal ribosomal protein uS11 family.</text>
</comment>
<keyword id="KW-0687">Ribonucleoprotein</keyword>
<keyword id="KW-0689">Ribosomal protein</keyword>
<keyword id="KW-0694">RNA-binding</keyword>
<keyword id="KW-0699">rRNA-binding</keyword>
<protein>
    <recommendedName>
        <fullName evidence="1">Small ribosomal subunit protein uS11</fullName>
    </recommendedName>
    <alternativeName>
        <fullName evidence="2">30S ribosomal protein S11</fullName>
    </alternativeName>
</protein>
<reference key="1">
    <citation type="submission" date="2008-05" db="EMBL/GenBank/DDBJ databases">
        <title>Genome sequence of Helicobacter pylori from the remote Amazon: traces of Asian ancestry of the first Americans.</title>
        <authorList>
            <person name="Kersulyte D."/>
            <person name="Kalia A."/>
            <person name="Gilman R.H."/>
            <person name="Berg D.E."/>
        </authorList>
    </citation>
    <scope>NUCLEOTIDE SEQUENCE [LARGE SCALE GENOMIC DNA]</scope>
    <source>
        <strain>Shi470</strain>
    </source>
</reference>
<dbReference type="EMBL" id="CP001072">
    <property type="protein sequence ID" value="ACD48740.1"/>
    <property type="molecule type" value="Genomic_DNA"/>
</dbReference>
<dbReference type="RefSeq" id="WP_001129292.1">
    <property type="nucleotide sequence ID" value="NC_010698.2"/>
</dbReference>
<dbReference type="SMR" id="B2UV58"/>
<dbReference type="KEGG" id="hps:HPSH_06700"/>
<dbReference type="HOGENOM" id="CLU_072439_5_0_7"/>
<dbReference type="GO" id="GO:1990904">
    <property type="term" value="C:ribonucleoprotein complex"/>
    <property type="evidence" value="ECO:0007669"/>
    <property type="project" value="UniProtKB-KW"/>
</dbReference>
<dbReference type="GO" id="GO:0005840">
    <property type="term" value="C:ribosome"/>
    <property type="evidence" value="ECO:0007669"/>
    <property type="project" value="UniProtKB-KW"/>
</dbReference>
<dbReference type="GO" id="GO:0019843">
    <property type="term" value="F:rRNA binding"/>
    <property type="evidence" value="ECO:0007669"/>
    <property type="project" value="UniProtKB-UniRule"/>
</dbReference>
<dbReference type="GO" id="GO:0003735">
    <property type="term" value="F:structural constituent of ribosome"/>
    <property type="evidence" value="ECO:0007669"/>
    <property type="project" value="InterPro"/>
</dbReference>
<dbReference type="GO" id="GO:0006412">
    <property type="term" value="P:translation"/>
    <property type="evidence" value="ECO:0007669"/>
    <property type="project" value="UniProtKB-UniRule"/>
</dbReference>
<dbReference type="FunFam" id="3.30.420.80:FF:000001">
    <property type="entry name" value="30S ribosomal protein S11"/>
    <property type="match status" value="1"/>
</dbReference>
<dbReference type="Gene3D" id="3.30.420.80">
    <property type="entry name" value="Ribosomal protein S11"/>
    <property type="match status" value="1"/>
</dbReference>
<dbReference type="HAMAP" id="MF_01310">
    <property type="entry name" value="Ribosomal_uS11"/>
    <property type="match status" value="1"/>
</dbReference>
<dbReference type="InterPro" id="IPR001971">
    <property type="entry name" value="Ribosomal_uS11"/>
</dbReference>
<dbReference type="InterPro" id="IPR019981">
    <property type="entry name" value="Ribosomal_uS11_bac-type"/>
</dbReference>
<dbReference type="InterPro" id="IPR018102">
    <property type="entry name" value="Ribosomal_uS11_CS"/>
</dbReference>
<dbReference type="InterPro" id="IPR036967">
    <property type="entry name" value="Ribosomal_uS11_sf"/>
</dbReference>
<dbReference type="NCBIfam" id="NF003698">
    <property type="entry name" value="PRK05309.1"/>
    <property type="match status" value="1"/>
</dbReference>
<dbReference type="NCBIfam" id="TIGR03632">
    <property type="entry name" value="uS11_bact"/>
    <property type="match status" value="1"/>
</dbReference>
<dbReference type="PANTHER" id="PTHR11759">
    <property type="entry name" value="40S RIBOSOMAL PROTEIN S14/30S RIBOSOMAL PROTEIN S11"/>
    <property type="match status" value="1"/>
</dbReference>
<dbReference type="Pfam" id="PF00411">
    <property type="entry name" value="Ribosomal_S11"/>
    <property type="match status" value="1"/>
</dbReference>
<dbReference type="PIRSF" id="PIRSF002131">
    <property type="entry name" value="Ribosomal_S11"/>
    <property type="match status" value="1"/>
</dbReference>
<dbReference type="SUPFAM" id="SSF53137">
    <property type="entry name" value="Translational machinery components"/>
    <property type="match status" value="1"/>
</dbReference>
<dbReference type="PROSITE" id="PS00054">
    <property type="entry name" value="RIBOSOMAL_S11"/>
    <property type="match status" value="1"/>
</dbReference>